<name>ASNA_PLACU</name>
<reference evidence="3" key="1">
    <citation type="journal article" date="2014" name="BMC Biol.">
        <title>A comprehensive evaluation of rodent malaria parasite genomes and gene expression.</title>
        <authorList>
            <person name="Otto T.D."/>
            <person name="Bohme U."/>
            <person name="Jackson A.P."/>
            <person name="Hunt M."/>
            <person name="Franke-Fayard B."/>
            <person name="Hoeijmakers W.A."/>
            <person name="Religa A.A."/>
            <person name="Robertson L."/>
            <person name="Sanders M."/>
            <person name="Ogun S.A."/>
            <person name="Cunningham D."/>
            <person name="Erhart A."/>
            <person name="Billker O."/>
            <person name="Khan S.M."/>
            <person name="Stunnenberg H.G."/>
            <person name="Langhorne J."/>
            <person name="Holder A.A."/>
            <person name="Waters A.P."/>
            <person name="Newbold C.I."/>
            <person name="Pain A."/>
            <person name="Berriman M."/>
            <person name="Janse C.J."/>
        </authorList>
    </citation>
    <scope>NUCLEOTIDE SEQUENCE [LARGE SCALE GENOMIC DNA]</scope>
    <source>
        <strain evidence="3">AS</strain>
    </source>
</reference>
<reference evidence="4" key="2">
    <citation type="submission" date="2016-08" db="EMBL/GenBank/DDBJ databases">
        <authorList>
            <consortium name="Pathogen Informatics"/>
        </authorList>
    </citation>
    <scope>NUCLEOTIDE SEQUENCE [LARGE SCALE GENOMIC DNA]</scope>
    <source>
        <strain>AJ</strain>
        <strain evidence="4">CB</strain>
    </source>
</reference>
<protein>
    <recommendedName>
        <fullName evidence="1">ATPase ASNA1 homolog</fullName>
        <ecNumber evidence="1">3.6.-.-</ecNumber>
    </recommendedName>
    <alternativeName>
        <fullName evidence="1">Arsenical pump-driving ATPase homolog</fullName>
    </alternativeName>
    <alternativeName>
        <fullName evidence="1">Arsenite-stimulated ATPase</fullName>
    </alternativeName>
</protein>
<accession>Q4XST6</accession>
<accession>A0A077TJS0</accession>
<proteinExistence type="inferred from homology"/>
<gene>
    <name type="ORF">PC000665.03.0</name>
    <name evidence="2" type="ORF">PCHAS_0726100</name>
</gene>
<organism evidence="3">
    <name type="scientific">Plasmodium chabaudi chabaudi</name>
    <dbReference type="NCBI Taxonomy" id="31271"/>
    <lineage>
        <taxon>Eukaryota</taxon>
        <taxon>Sar</taxon>
        <taxon>Alveolata</taxon>
        <taxon>Apicomplexa</taxon>
        <taxon>Aconoidasida</taxon>
        <taxon>Haemosporida</taxon>
        <taxon>Plasmodiidae</taxon>
        <taxon>Plasmodium</taxon>
        <taxon>Plasmodium (Vinckeia)</taxon>
    </lineage>
</organism>
<evidence type="ECO:0000255" key="1">
    <source>
        <dbReference type="HAMAP-Rule" id="MF_03112"/>
    </source>
</evidence>
<evidence type="ECO:0000312" key="2">
    <source>
        <dbReference type="EMBL" id="VTZ68131.1"/>
    </source>
</evidence>
<evidence type="ECO:0000312" key="3">
    <source>
        <dbReference type="Proteomes" id="UP000071118"/>
    </source>
</evidence>
<evidence type="ECO:0000312" key="4">
    <source>
        <dbReference type="Proteomes" id="UP000195489"/>
    </source>
</evidence>
<comment type="function">
    <text evidence="1">ATPase required for the post-translational delivery of tail-anchored (TA) proteins to the endoplasmic reticulum. Recognizes and selectively binds the transmembrane domain of TA proteins in the cytosol. This complex then targets to the endoplasmic reticulum by membrane-bound receptors, where the tail-anchored protein is released for insertion. This process is regulated by ATP binding and hydrolysis. ATP binding drives the homodimer towards the closed dimer state, facilitating recognition of newly synthesized TA membrane proteins. ATP hydrolysis is required for insertion. Subsequently, the homodimer reverts towards the open dimer state, lowering its affinity for the membrane-bound receptor, and returning it to the cytosol to initiate a new round of targeting.</text>
</comment>
<comment type="subunit">
    <text evidence="1">Homodimer.</text>
</comment>
<comment type="subcellular location">
    <subcellularLocation>
        <location evidence="1">Cytoplasm</location>
    </subcellularLocation>
    <subcellularLocation>
        <location evidence="1">Endoplasmic reticulum</location>
    </subcellularLocation>
</comment>
<comment type="similarity">
    <text evidence="1">Belongs to the arsA ATPase family.</text>
</comment>
<dbReference type="EC" id="3.6.-.-" evidence="1"/>
<dbReference type="EMBL" id="LK022884">
    <property type="protein sequence ID" value="VTZ68131.1"/>
    <property type="molecule type" value="Genomic_DNA"/>
</dbReference>
<dbReference type="EMBL" id="LT608173">
    <property type="protein sequence ID" value="SCM01131.1"/>
    <property type="molecule type" value="Genomic_DNA"/>
</dbReference>
<dbReference type="EMBL" id="LT608159">
    <property type="protein sequence ID" value="SCM02720.1"/>
    <property type="molecule type" value="Genomic_DNA"/>
</dbReference>
<dbReference type="RefSeq" id="XP_743848.1">
    <property type="nucleotide sequence ID" value="XM_738755.1"/>
</dbReference>
<dbReference type="SMR" id="Q4XST6"/>
<dbReference type="EnsemblProtists" id="CDR12238">
    <property type="protein sequence ID" value="CDR12238"/>
    <property type="gene ID" value="PCHAS_072610"/>
</dbReference>
<dbReference type="GeneID" id="3496956"/>
<dbReference type="KEGG" id="pcb:PCHAS_0726100"/>
<dbReference type="VEuPathDB" id="PlasmoDB:PCHAS_0726100"/>
<dbReference type="eggNOG" id="KOG2825">
    <property type="taxonomic scope" value="Eukaryota"/>
</dbReference>
<dbReference type="HOGENOM" id="CLU_040761_0_0_1"/>
<dbReference type="OrthoDB" id="1770at2759"/>
<dbReference type="Proteomes" id="UP000071118">
    <property type="component" value="Chromosome 7"/>
</dbReference>
<dbReference type="Proteomes" id="UP000195489">
    <property type="component" value="Chromosome 7"/>
</dbReference>
<dbReference type="Proteomes" id="UP000507163">
    <property type="component" value="Chromosome 7"/>
</dbReference>
<dbReference type="GO" id="GO:0043529">
    <property type="term" value="C:GET complex"/>
    <property type="evidence" value="ECO:0007669"/>
    <property type="project" value="TreeGrafter"/>
</dbReference>
<dbReference type="GO" id="GO:0005524">
    <property type="term" value="F:ATP binding"/>
    <property type="evidence" value="ECO:0007669"/>
    <property type="project" value="UniProtKB-UniRule"/>
</dbReference>
<dbReference type="GO" id="GO:0016887">
    <property type="term" value="F:ATP hydrolysis activity"/>
    <property type="evidence" value="ECO:0007669"/>
    <property type="project" value="InterPro"/>
</dbReference>
<dbReference type="GO" id="GO:0071816">
    <property type="term" value="P:tail-anchored membrane protein insertion into ER membrane"/>
    <property type="evidence" value="ECO:0007669"/>
    <property type="project" value="TreeGrafter"/>
</dbReference>
<dbReference type="CDD" id="cd02035">
    <property type="entry name" value="ArsA"/>
    <property type="match status" value="1"/>
</dbReference>
<dbReference type="FunFam" id="3.40.50.300:FF:001459">
    <property type="entry name" value="ATPase ASNA1 homolog"/>
    <property type="match status" value="1"/>
</dbReference>
<dbReference type="Gene3D" id="3.40.50.300">
    <property type="entry name" value="P-loop containing nucleotide triphosphate hydrolases"/>
    <property type="match status" value="1"/>
</dbReference>
<dbReference type="HAMAP" id="MF_03112">
    <property type="entry name" value="Asna1_Get3"/>
    <property type="match status" value="1"/>
</dbReference>
<dbReference type="InterPro" id="IPR025723">
    <property type="entry name" value="Anion-transp_ATPase-like_dom"/>
</dbReference>
<dbReference type="InterPro" id="IPR016300">
    <property type="entry name" value="ATPase_ArsA/GET3"/>
</dbReference>
<dbReference type="InterPro" id="IPR027542">
    <property type="entry name" value="ATPase_ArsA/GET3_euk"/>
</dbReference>
<dbReference type="InterPro" id="IPR027417">
    <property type="entry name" value="P-loop_NTPase"/>
</dbReference>
<dbReference type="NCBIfam" id="TIGR00345">
    <property type="entry name" value="GET3_arsA_TRC40"/>
    <property type="match status" value="1"/>
</dbReference>
<dbReference type="PANTHER" id="PTHR10803">
    <property type="entry name" value="ARSENICAL PUMP-DRIVING ATPASE ARSENITE-TRANSLOCATING ATPASE"/>
    <property type="match status" value="1"/>
</dbReference>
<dbReference type="PANTHER" id="PTHR10803:SF3">
    <property type="entry name" value="ATPASE GET3"/>
    <property type="match status" value="1"/>
</dbReference>
<dbReference type="Pfam" id="PF02374">
    <property type="entry name" value="ArsA_ATPase"/>
    <property type="match status" value="2"/>
</dbReference>
<dbReference type="SUPFAM" id="SSF52540">
    <property type="entry name" value="P-loop containing nucleoside triphosphate hydrolases"/>
    <property type="match status" value="1"/>
</dbReference>
<keyword id="KW-0067">ATP-binding</keyword>
<keyword id="KW-0963">Cytoplasm</keyword>
<keyword id="KW-0256">Endoplasmic reticulum</keyword>
<keyword id="KW-0378">Hydrolase</keyword>
<keyword id="KW-0547">Nucleotide-binding</keyword>
<keyword id="KW-0813">Transport</keyword>
<feature type="chain" id="PRO_0000388170" description="ATPase ASNA1 homolog">
    <location>
        <begin position="1"/>
        <end position="380"/>
    </location>
</feature>
<feature type="active site" evidence="1">
    <location>
        <position position="77"/>
    </location>
</feature>
<feature type="binding site" evidence="1">
    <location>
        <begin position="48"/>
        <end position="55"/>
    </location>
    <ligand>
        <name>ATP</name>
        <dbReference type="ChEBI" id="CHEBI:30616"/>
    </ligand>
</feature>
<feature type="binding site" evidence="1">
    <location>
        <position position="248"/>
    </location>
    <ligand>
        <name>ATP</name>
        <dbReference type="ChEBI" id="CHEBI:30616"/>
    </ligand>
</feature>
<feature type="binding site" evidence="1">
    <location>
        <position position="275"/>
    </location>
    <ligand>
        <name>ATP</name>
        <dbReference type="ChEBI" id="CHEBI:30616"/>
    </ligand>
</feature>
<sequence>MSKAGSDASSISCSLSLDSDSCDDEFYETNLNKLIENTSLNWIFVGGKGGVGKTTTSCSIAIQLAKKRESVLLLSTDPAHNTSDAFNQKFTNKPTLINSFDNLYCMEIDTTFSEDTAFKINKSDFLNSIIPELLQSFPGIDEALCFAELMQSIRNMKYSVIVFDTAPTGHTLRLLAFPDLLKKALGYLINLKEKLKGTLNMLQSLTSNEMEFEGMYDKINHLNTMSISIQENFQNPLKTTFVCVCIPEFLSVYETERLIQELTKKNISCYNIVVNQVVFPLTSQDANIESCEGLLKQIKDTNIKDSFSSLILKAKELEDVYISRRKLQSKYLTQIKNLYGNYFHIVCMPQLKSEIRGLDKIASFSEMLLQSKDIPIYSPQ</sequence>